<feature type="chain" id="PRO_0000252346" description="ER lumen protein-retaining receptor 1">
    <location>
        <begin position="1"/>
        <end position="212"/>
    </location>
</feature>
<feature type="topological domain" description="Lumenal" evidence="5">
    <location>
        <begin position="1"/>
        <end position="4"/>
    </location>
</feature>
<feature type="transmembrane region" description="Helical" evidence="4">
    <location>
        <begin position="5"/>
        <end position="24"/>
    </location>
</feature>
<feature type="topological domain" description="Cytoplasmic" evidence="5">
    <location>
        <begin position="25"/>
        <end position="32"/>
    </location>
</feature>
<feature type="transmembrane region" description="Helical" evidence="4">
    <location>
        <begin position="33"/>
        <end position="52"/>
    </location>
</feature>
<feature type="topological domain" description="Lumenal" evidence="5">
    <location>
        <begin position="53"/>
        <end position="58"/>
    </location>
</feature>
<feature type="transmembrane region" description="Helical" evidence="4">
    <location>
        <begin position="59"/>
        <end position="79"/>
    </location>
</feature>
<feature type="topological domain" description="Cytoplasmic" evidence="5">
    <location>
        <begin position="80"/>
        <end position="92"/>
    </location>
</feature>
<feature type="transmembrane region" description="Helical" evidence="4">
    <location>
        <begin position="93"/>
        <end position="110"/>
    </location>
</feature>
<feature type="topological domain" description="Lumenal" evidence="5">
    <location>
        <begin position="111"/>
        <end position="116"/>
    </location>
</feature>
<feature type="transmembrane region" description="Helical" evidence="4">
    <location>
        <begin position="117"/>
        <end position="135"/>
    </location>
</feature>
<feature type="topological domain" description="Cytoplasmic" evidence="5">
    <location>
        <begin position="136"/>
        <end position="149"/>
    </location>
</feature>
<feature type="transmembrane region" description="Helical" evidence="4">
    <location>
        <begin position="150"/>
        <end position="168"/>
    </location>
</feature>
<feature type="topological domain" description="Lumenal" evidence="5">
    <location>
        <begin position="169"/>
        <end position="178"/>
    </location>
</feature>
<feature type="transmembrane region" description="Helical" evidence="4">
    <location>
        <begin position="179"/>
        <end position="199"/>
    </location>
</feature>
<feature type="topological domain" description="Cytoplasmic" evidence="5">
    <location>
        <begin position="200"/>
        <end position="212"/>
    </location>
</feature>
<feature type="region of interest" description="Interaction with the K-D-E-L motif on target proteins" evidence="4">
    <location>
        <begin position="47"/>
        <end position="48"/>
    </location>
</feature>
<feature type="region of interest" description="Interaction with the K-D-E-L motif on target proteins" evidence="4">
    <location>
        <begin position="159"/>
        <end position="169"/>
    </location>
</feature>
<feature type="region of interest" description="Important for recycling of cargo proteins with the sequence motif K-D-E-L from the Golgi to the endoplasmic reticulum" evidence="3">
    <location>
        <begin position="204"/>
        <end position="207"/>
    </location>
</feature>
<feature type="site" description="Interaction with the K-D-E-L motif on target proteins" evidence="4">
    <location>
        <position position="5"/>
    </location>
</feature>
<feature type="site" description="Interaction with the K-D-E-L motif on target proteins" evidence="4">
    <location>
        <position position="117"/>
    </location>
</feature>
<feature type="site" description="Important for recycling of cargo proteins with the sequence motif K-D-E-L from the Golgi to the endoplasmic reticulum" evidence="1">
    <location>
        <position position="193"/>
    </location>
</feature>
<feature type="sequence conflict" description="In Ref. 1; CAJ83568." evidence="5" ref="1">
    <original>T</original>
    <variation>I</variation>
    <location>
        <position position="114"/>
    </location>
</feature>
<comment type="function">
    <text evidence="1">Receptor for the C-terminal sequence motif K-D-E-L that is present on endoplasmic reticulum resident proteins and that mediates their recycling from the Golgi back to the endoplasmic reticulum.</text>
</comment>
<comment type="subcellular location">
    <subcellularLocation>
        <location evidence="2">Golgi apparatus membrane</location>
        <topology evidence="2">Multi-pass membrane protein</topology>
    </subcellularLocation>
    <subcellularLocation>
        <location evidence="2">Cytoplasmic vesicle</location>
        <location evidence="2">COPI-coated vesicle membrane</location>
        <topology evidence="2">Multi-pass membrane protein</topology>
    </subcellularLocation>
    <subcellularLocation>
        <location evidence="2">Endoplasmic reticulum membrane</location>
        <topology evidence="2">Multi-pass membrane protein</topology>
    </subcellularLocation>
    <subcellularLocation>
        <location evidence="2">Endoplasmic reticulum-Golgi intermediate compartment membrane</location>
        <topology evidence="2">Multi-pass membrane protein</topology>
    </subcellularLocation>
    <text evidence="2">Localized in the Golgi in the absence of bound proteins with the sequence motif K-D-E-L. Trafficks back to the endoplasmic reticulum together with cargo proteins containing the sequence motif K-D-E-L.</text>
</comment>
<comment type="similarity">
    <text evidence="5">Belongs to the ERD2 family.</text>
</comment>
<accession>Q5XHA2</accession>
<accession>Q28FZ7</accession>
<evidence type="ECO:0000250" key="1">
    <source>
        <dbReference type="UniProtKB" id="P24390"/>
    </source>
</evidence>
<evidence type="ECO:0000250" key="2">
    <source>
        <dbReference type="UniProtKB" id="P33946"/>
    </source>
</evidence>
<evidence type="ECO:0000250" key="3">
    <source>
        <dbReference type="UniProtKB" id="P33947"/>
    </source>
</evidence>
<evidence type="ECO:0000250" key="4">
    <source>
        <dbReference type="UniProtKB" id="Q5ZKX9"/>
    </source>
</evidence>
<evidence type="ECO:0000305" key="5"/>
<proteinExistence type="evidence at transcript level"/>
<reference key="1">
    <citation type="submission" date="2006-06" db="EMBL/GenBank/DDBJ databases">
        <authorList>
            <consortium name="Sanger Xenopus tropicalis EST/cDNA project"/>
        </authorList>
    </citation>
    <scope>NUCLEOTIDE SEQUENCE [LARGE SCALE MRNA]</scope>
    <source>
        <tissue>Gastrula</tissue>
    </source>
</reference>
<reference key="2">
    <citation type="submission" date="2004-10" db="EMBL/GenBank/DDBJ databases">
        <authorList>
            <consortium name="NIH - Xenopus Gene Collection (XGC) project"/>
        </authorList>
    </citation>
    <scope>NUCLEOTIDE SEQUENCE [LARGE SCALE MRNA]</scope>
    <source>
        <tissue>Embryo</tissue>
    </source>
</reference>
<protein>
    <recommendedName>
        <fullName>ER lumen protein-retaining receptor 1</fullName>
    </recommendedName>
    <alternativeName>
        <fullName>KDEL endoplasmic reticulum protein retention receptor 1</fullName>
        <shortName>KDEL receptor 1</shortName>
    </alternativeName>
</protein>
<gene>
    <name type="primary">kdelr1</name>
    <name type="ORF">TGas070a01.1</name>
</gene>
<keyword id="KW-0968">Cytoplasmic vesicle</keyword>
<keyword id="KW-0256">Endoplasmic reticulum</keyword>
<keyword id="KW-0931">ER-Golgi transport</keyword>
<keyword id="KW-0333">Golgi apparatus</keyword>
<keyword id="KW-0472">Membrane</keyword>
<keyword id="KW-0653">Protein transport</keyword>
<keyword id="KW-0675">Receptor</keyword>
<keyword id="KW-1185">Reference proteome</keyword>
<keyword id="KW-0812">Transmembrane</keyword>
<keyword id="KW-1133">Transmembrane helix</keyword>
<keyword id="KW-0813">Transport</keyword>
<organism>
    <name type="scientific">Xenopus tropicalis</name>
    <name type="common">Western clawed frog</name>
    <name type="synonym">Silurana tropicalis</name>
    <dbReference type="NCBI Taxonomy" id="8364"/>
    <lineage>
        <taxon>Eukaryota</taxon>
        <taxon>Metazoa</taxon>
        <taxon>Chordata</taxon>
        <taxon>Craniata</taxon>
        <taxon>Vertebrata</taxon>
        <taxon>Euteleostomi</taxon>
        <taxon>Amphibia</taxon>
        <taxon>Batrachia</taxon>
        <taxon>Anura</taxon>
        <taxon>Pipoidea</taxon>
        <taxon>Pipidae</taxon>
        <taxon>Xenopodinae</taxon>
        <taxon>Xenopus</taxon>
        <taxon>Silurana</taxon>
    </lineage>
</organism>
<name>ERD21_XENTR</name>
<sequence length="212" mass="24551">MNIFRFLGDISHLSAILILLLKIWKSRSCAGISGKSQLLFAIVFTTRYLDLFTNFISLYNTSMKMVYVASSYATIWMIYSKFKATYDGNHDTFRVEFLIVPTAILAFLVNHDFTPLEILWTFSIYLESVAILPQLFMVSKTGEAETITSHYLFALGIYRALYLFNWIWRYQFEGFFDLIAIVAGLVQTVLYCDFFYLYITKVLKGKKLSLPA</sequence>
<dbReference type="EMBL" id="CR761657">
    <property type="protein sequence ID" value="CAJ83568.1"/>
    <property type="molecule type" value="mRNA"/>
</dbReference>
<dbReference type="EMBL" id="BC084170">
    <property type="protein sequence ID" value="AAH84170.1"/>
    <property type="molecule type" value="mRNA"/>
</dbReference>
<dbReference type="RefSeq" id="NP_001011046.1">
    <property type="nucleotide sequence ID" value="NM_001011046.1"/>
</dbReference>
<dbReference type="SMR" id="Q5XHA2"/>
<dbReference type="FunCoup" id="Q5XHA2">
    <property type="interactions" value="1587"/>
</dbReference>
<dbReference type="STRING" id="8364.ENSXETP00000025536"/>
<dbReference type="PaxDb" id="8364-ENSXETP00000023269"/>
<dbReference type="DNASU" id="496456"/>
<dbReference type="GeneID" id="496456"/>
<dbReference type="KEGG" id="xtr:496456"/>
<dbReference type="AGR" id="Xenbase:XB-GENE-943535"/>
<dbReference type="CTD" id="10945"/>
<dbReference type="Xenbase" id="XB-GENE-943535">
    <property type="gene designation" value="kdelr2"/>
</dbReference>
<dbReference type="eggNOG" id="KOG3106">
    <property type="taxonomic scope" value="Eukaryota"/>
</dbReference>
<dbReference type="HOGENOM" id="CLU_057784_0_0_1"/>
<dbReference type="InParanoid" id="Q5XHA2"/>
<dbReference type="OMA" id="YAEDHYD"/>
<dbReference type="OrthoDB" id="7694678at2759"/>
<dbReference type="PhylomeDB" id="Q5XHA2"/>
<dbReference type="TreeFam" id="TF314792"/>
<dbReference type="Reactome" id="R-XTR-6807878">
    <property type="pathway name" value="COPI-mediated anterograde transport"/>
</dbReference>
<dbReference type="Reactome" id="R-XTR-6811434">
    <property type="pathway name" value="COPI-dependent Golgi-to-ER retrograde traffic"/>
</dbReference>
<dbReference type="Proteomes" id="UP000008143">
    <property type="component" value="Chromosome 7"/>
</dbReference>
<dbReference type="Bgee" id="ENSXETG00000010606">
    <property type="expression patterns" value="Expressed in liver and 15 other cell types or tissues"/>
</dbReference>
<dbReference type="ExpressionAtlas" id="Q5XHA2">
    <property type="expression patterns" value="baseline"/>
</dbReference>
<dbReference type="GO" id="GO:0030663">
    <property type="term" value="C:COPI-coated vesicle membrane"/>
    <property type="evidence" value="ECO:0007669"/>
    <property type="project" value="UniProtKB-SubCell"/>
</dbReference>
<dbReference type="GO" id="GO:0005789">
    <property type="term" value="C:endoplasmic reticulum membrane"/>
    <property type="evidence" value="ECO:0007669"/>
    <property type="project" value="UniProtKB-SubCell"/>
</dbReference>
<dbReference type="GO" id="GO:0033116">
    <property type="term" value="C:endoplasmic reticulum-Golgi intermediate compartment membrane"/>
    <property type="evidence" value="ECO:0007669"/>
    <property type="project" value="UniProtKB-SubCell"/>
</dbReference>
<dbReference type="GO" id="GO:0000139">
    <property type="term" value="C:Golgi membrane"/>
    <property type="evidence" value="ECO:0000250"/>
    <property type="project" value="UniProtKB"/>
</dbReference>
<dbReference type="GO" id="GO:0005046">
    <property type="term" value="F:KDEL sequence binding"/>
    <property type="evidence" value="ECO:0000250"/>
    <property type="project" value="UniProtKB"/>
</dbReference>
<dbReference type="GO" id="GO:0006621">
    <property type="term" value="P:protein retention in ER lumen"/>
    <property type="evidence" value="ECO:0007669"/>
    <property type="project" value="InterPro"/>
</dbReference>
<dbReference type="GO" id="GO:0015031">
    <property type="term" value="P:protein transport"/>
    <property type="evidence" value="ECO:0007669"/>
    <property type="project" value="UniProtKB-KW"/>
</dbReference>
<dbReference type="GO" id="GO:0006890">
    <property type="term" value="P:retrograde vesicle-mediated transport, Golgi to endoplasmic reticulum"/>
    <property type="evidence" value="ECO:0000250"/>
    <property type="project" value="UniProtKB"/>
</dbReference>
<dbReference type="InterPro" id="IPR000133">
    <property type="entry name" value="ER_ret_rcpt"/>
</dbReference>
<dbReference type="PANTHER" id="PTHR10585">
    <property type="entry name" value="ER LUMEN PROTEIN RETAINING RECEPTOR"/>
    <property type="match status" value="1"/>
</dbReference>
<dbReference type="Pfam" id="PF00810">
    <property type="entry name" value="ER_lumen_recept"/>
    <property type="match status" value="1"/>
</dbReference>
<dbReference type="PRINTS" id="PR00660">
    <property type="entry name" value="ERLUMENR"/>
</dbReference>
<dbReference type="PROSITE" id="PS00951">
    <property type="entry name" value="ER_LUMEN_RECEPTOR_1"/>
    <property type="match status" value="1"/>
</dbReference>
<dbReference type="PROSITE" id="PS00952">
    <property type="entry name" value="ER_LUMEN_RECEPTOR_2"/>
    <property type="match status" value="1"/>
</dbReference>